<organism>
    <name type="scientific">Francisella tularensis subsp. tularensis (strain FSC 198)</name>
    <dbReference type="NCBI Taxonomy" id="393115"/>
    <lineage>
        <taxon>Bacteria</taxon>
        <taxon>Pseudomonadati</taxon>
        <taxon>Pseudomonadota</taxon>
        <taxon>Gammaproteobacteria</taxon>
        <taxon>Thiotrichales</taxon>
        <taxon>Francisellaceae</taxon>
        <taxon>Francisella</taxon>
    </lineage>
</organism>
<proteinExistence type="inferred from homology"/>
<comment type="function">
    <text evidence="1">Involved in protein export. Acts as a chaperone by maintaining the newly synthesized protein in an open conformation. Functions as a peptidyl-prolyl cis-trans isomerase.</text>
</comment>
<comment type="catalytic activity">
    <reaction evidence="1">
        <text>[protein]-peptidylproline (omega=180) = [protein]-peptidylproline (omega=0)</text>
        <dbReference type="Rhea" id="RHEA:16237"/>
        <dbReference type="Rhea" id="RHEA-COMP:10747"/>
        <dbReference type="Rhea" id="RHEA-COMP:10748"/>
        <dbReference type="ChEBI" id="CHEBI:83833"/>
        <dbReference type="ChEBI" id="CHEBI:83834"/>
        <dbReference type="EC" id="5.2.1.8"/>
    </reaction>
</comment>
<comment type="subcellular location">
    <subcellularLocation>
        <location>Cytoplasm</location>
    </subcellularLocation>
    <text evidence="1">About half TF is bound to the ribosome near the polypeptide exit tunnel while the other half is free in the cytoplasm.</text>
</comment>
<comment type="domain">
    <text evidence="1">Consists of 3 domains; the N-terminus binds the ribosome, the middle domain has PPIase activity, while the C-terminus has intrinsic chaperone activity on its own.</text>
</comment>
<comment type="similarity">
    <text evidence="1">Belongs to the FKBP-type PPIase family. Tig subfamily.</text>
</comment>
<evidence type="ECO:0000255" key="1">
    <source>
        <dbReference type="HAMAP-Rule" id="MF_00303"/>
    </source>
</evidence>
<sequence>MQVTVEKKEGIHCSLLIEVPANEIDSVVSKEINRTAKTIKMDGFRPGKVPAGMVKKKYGEQIRMEVISDLIPQKYSKAIQDEKLAVAGIEVELKENKEGQPLKFVANLELFPEFEVTGFEKIEVQKPVVELTDKEVKQMIENLRKQFATFSEVDKVVEKDDKVTIDFVGKKDGEAFEGGTANDIDVIIGSGQMIPGFEDGIIGMKKGEQKTITVTFPQDYQNKDLAEAETTFDITVKKIQQAELPEVNDEFVKKFGVKGGVDTFENEIKENMQRELKFILQRKVKDQVFKGLREIAEFETPKSLIKREIDAAKQNLLKQMGGAKGFDVNQLSDNLFEANAKQKVETSLILDSIMNSQEFKAEEAEVESLLDELVQAYEEPEKTKEQIKKNDKEIANLKALVIENKLTDWVLEQAKVTEKTEDFFEVIKENMQAQQAGF</sequence>
<reference key="1">
    <citation type="journal article" date="2007" name="PLoS ONE">
        <title>Genome sequencing shows that European isolates of Francisella tularensis subspecies tularensis are almost identical to US laboratory strain Schu S4.</title>
        <authorList>
            <person name="Chaudhuri R.R."/>
            <person name="Ren C.-P."/>
            <person name="Desmond L."/>
            <person name="Vincent G.A."/>
            <person name="Silman N.J."/>
            <person name="Brehm J.K."/>
            <person name="Elmore M.J."/>
            <person name="Hudson M.J."/>
            <person name="Forsman M."/>
            <person name="Isherwood K.E."/>
            <person name="Gurycova D."/>
            <person name="Minton N.P."/>
            <person name="Titball R.W."/>
            <person name="Pallen M.J."/>
            <person name="Vipond R."/>
        </authorList>
    </citation>
    <scope>NUCLEOTIDE SEQUENCE [LARGE SCALE GENOMIC DNA]</scope>
    <source>
        <strain>FSC 198</strain>
    </source>
</reference>
<name>TIG_FRAT1</name>
<accession>Q14IK0</accession>
<feature type="chain" id="PRO_1000022679" description="Trigger factor">
    <location>
        <begin position="1"/>
        <end position="438"/>
    </location>
</feature>
<feature type="domain" description="PPIase FKBP-type" evidence="1">
    <location>
        <begin position="160"/>
        <end position="245"/>
    </location>
</feature>
<protein>
    <recommendedName>
        <fullName evidence="1">Trigger factor</fullName>
        <shortName evidence="1">TF</shortName>
        <ecNumber evidence="1">5.2.1.8</ecNumber>
    </recommendedName>
    <alternativeName>
        <fullName evidence="1">PPIase</fullName>
    </alternativeName>
</protein>
<keyword id="KW-0131">Cell cycle</keyword>
<keyword id="KW-0132">Cell division</keyword>
<keyword id="KW-0143">Chaperone</keyword>
<keyword id="KW-0963">Cytoplasm</keyword>
<keyword id="KW-0413">Isomerase</keyword>
<keyword id="KW-0697">Rotamase</keyword>
<gene>
    <name evidence="1" type="primary">tig</name>
    <name type="ordered locus">FTF0623</name>
</gene>
<dbReference type="EC" id="5.2.1.8" evidence="1"/>
<dbReference type="EMBL" id="AM286280">
    <property type="protein sequence ID" value="CAL08639.1"/>
    <property type="molecule type" value="Genomic_DNA"/>
</dbReference>
<dbReference type="RefSeq" id="WP_003023405.1">
    <property type="nucleotide sequence ID" value="NC_008245.1"/>
</dbReference>
<dbReference type="SMR" id="Q14IK0"/>
<dbReference type="KEGG" id="ftf:FTF0623"/>
<dbReference type="HOGENOM" id="CLU_033058_2_0_6"/>
<dbReference type="GO" id="GO:0005737">
    <property type="term" value="C:cytoplasm"/>
    <property type="evidence" value="ECO:0007669"/>
    <property type="project" value="UniProtKB-SubCell"/>
</dbReference>
<dbReference type="GO" id="GO:0003755">
    <property type="term" value="F:peptidyl-prolyl cis-trans isomerase activity"/>
    <property type="evidence" value="ECO:0007669"/>
    <property type="project" value="UniProtKB-UniRule"/>
</dbReference>
<dbReference type="GO" id="GO:0044183">
    <property type="term" value="F:protein folding chaperone"/>
    <property type="evidence" value="ECO:0007669"/>
    <property type="project" value="TreeGrafter"/>
</dbReference>
<dbReference type="GO" id="GO:0043022">
    <property type="term" value="F:ribosome binding"/>
    <property type="evidence" value="ECO:0007669"/>
    <property type="project" value="TreeGrafter"/>
</dbReference>
<dbReference type="GO" id="GO:0051083">
    <property type="term" value="P:'de novo' cotranslational protein folding"/>
    <property type="evidence" value="ECO:0007669"/>
    <property type="project" value="TreeGrafter"/>
</dbReference>
<dbReference type="GO" id="GO:0051301">
    <property type="term" value="P:cell division"/>
    <property type="evidence" value="ECO:0007669"/>
    <property type="project" value="UniProtKB-KW"/>
</dbReference>
<dbReference type="GO" id="GO:0061077">
    <property type="term" value="P:chaperone-mediated protein folding"/>
    <property type="evidence" value="ECO:0007669"/>
    <property type="project" value="TreeGrafter"/>
</dbReference>
<dbReference type="GO" id="GO:0015031">
    <property type="term" value="P:protein transport"/>
    <property type="evidence" value="ECO:0007669"/>
    <property type="project" value="UniProtKB-UniRule"/>
</dbReference>
<dbReference type="GO" id="GO:0043335">
    <property type="term" value="P:protein unfolding"/>
    <property type="evidence" value="ECO:0007669"/>
    <property type="project" value="TreeGrafter"/>
</dbReference>
<dbReference type="FunFam" id="3.10.50.40:FF:000001">
    <property type="entry name" value="Trigger factor"/>
    <property type="match status" value="1"/>
</dbReference>
<dbReference type="Gene3D" id="3.10.50.40">
    <property type="match status" value="1"/>
</dbReference>
<dbReference type="Gene3D" id="3.30.70.1050">
    <property type="entry name" value="Trigger factor ribosome-binding domain"/>
    <property type="match status" value="1"/>
</dbReference>
<dbReference type="Gene3D" id="1.10.3120.10">
    <property type="entry name" value="Trigger factor, C-terminal domain"/>
    <property type="match status" value="1"/>
</dbReference>
<dbReference type="HAMAP" id="MF_00303">
    <property type="entry name" value="Trigger_factor_Tig"/>
    <property type="match status" value="1"/>
</dbReference>
<dbReference type="InterPro" id="IPR046357">
    <property type="entry name" value="PPIase_dom_sf"/>
</dbReference>
<dbReference type="InterPro" id="IPR001179">
    <property type="entry name" value="PPIase_FKBP_dom"/>
</dbReference>
<dbReference type="InterPro" id="IPR005215">
    <property type="entry name" value="Trig_fac"/>
</dbReference>
<dbReference type="InterPro" id="IPR008880">
    <property type="entry name" value="Trigger_fac_C"/>
</dbReference>
<dbReference type="InterPro" id="IPR037041">
    <property type="entry name" value="Trigger_fac_C_sf"/>
</dbReference>
<dbReference type="InterPro" id="IPR008881">
    <property type="entry name" value="Trigger_fac_ribosome-bd_bac"/>
</dbReference>
<dbReference type="InterPro" id="IPR036611">
    <property type="entry name" value="Trigger_fac_ribosome-bd_sf"/>
</dbReference>
<dbReference type="InterPro" id="IPR027304">
    <property type="entry name" value="Trigger_fact/SurA_dom_sf"/>
</dbReference>
<dbReference type="NCBIfam" id="TIGR00115">
    <property type="entry name" value="tig"/>
    <property type="match status" value="1"/>
</dbReference>
<dbReference type="PANTHER" id="PTHR30560">
    <property type="entry name" value="TRIGGER FACTOR CHAPERONE AND PEPTIDYL-PROLYL CIS/TRANS ISOMERASE"/>
    <property type="match status" value="1"/>
</dbReference>
<dbReference type="PANTHER" id="PTHR30560:SF3">
    <property type="entry name" value="TRIGGER FACTOR-LIKE PROTEIN TIG, CHLOROPLASTIC"/>
    <property type="match status" value="1"/>
</dbReference>
<dbReference type="Pfam" id="PF00254">
    <property type="entry name" value="FKBP_C"/>
    <property type="match status" value="1"/>
</dbReference>
<dbReference type="Pfam" id="PF05698">
    <property type="entry name" value="Trigger_C"/>
    <property type="match status" value="1"/>
</dbReference>
<dbReference type="Pfam" id="PF05697">
    <property type="entry name" value="Trigger_N"/>
    <property type="match status" value="1"/>
</dbReference>
<dbReference type="PIRSF" id="PIRSF003095">
    <property type="entry name" value="Trigger_factor"/>
    <property type="match status" value="1"/>
</dbReference>
<dbReference type="SUPFAM" id="SSF54534">
    <property type="entry name" value="FKBP-like"/>
    <property type="match status" value="1"/>
</dbReference>
<dbReference type="SUPFAM" id="SSF109998">
    <property type="entry name" value="Triger factor/SurA peptide-binding domain-like"/>
    <property type="match status" value="1"/>
</dbReference>
<dbReference type="SUPFAM" id="SSF102735">
    <property type="entry name" value="Trigger factor ribosome-binding domain"/>
    <property type="match status" value="1"/>
</dbReference>
<dbReference type="PROSITE" id="PS50059">
    <property type="entry name" value="FKBP_PPIASE"/>
    <property type="match status" value="1"/>
</dbReference>